<name>PSAB_PICP2</name>
<organism>
    <name type="scientific">Picosynechococcus sp. (strain ATCC 27264 / PCC 7002 / PR-6)</name>
    <name type="common">Agmenellum quadruplicatum</name>
    <dbReference type="NCBI Taxonomy" id="32049"/>
    <lineage>
        <taxon>Bacteria</taxon>
        <taxon>Bacillati</taxon>
        <taxon>Cyanobacteriota</taxon>
        <taxon>Cyanophyceae</taxon>
        <taxon>Oscillatoriophycideae</taxon>
        <taxon>Chroococcales</taxon>
        <taxon>Geminocystaceae</taxon>
        <taxon>Picosynechococcus</taxon>
    </lineage>
</organism>
<keyword id="KW-0004">4Fe-4S</keyword>
<keyword id="KW-0148">Chlorophyll</keyword>
<keyword id="KW-0157">Chromophore</keyword>
<keyword id="KW-0249">Electron transport</keyword>
<keyword id="KW-0408">Iron</keyword>
<keyword id="KW-0411">Iron-sulfur</keyword>
<keyword id="KW-0460">Magnesium</keyword>
<keyword id="KW-0472">Membrane</keyword>
<keyword id="KW-0479">Metal-binding</keyword>
<keyword id="KW-0560">Oxidoreductase</keyword>
<keyword id="KW-0602">Photosynthesis</keyword>
<keyword id="KW-0603">Photosystem I</keyword>
<keyword id="KW-1185">Reference proteome</keyword>
<keyword id="KW-0793">Thylakoid</keyword>
<keyword id="KW-0812">Transmembrane</keyword>
<keyword id="KW-1133">Transmembrane helix</keyword>
<keyword id="KW-0813">Transport</keyword>
<sequence>MATKFPKFSQDLAQDPTTRRIWYGIATAHDFETHDGMTEENLYQKIFASHFGHLAIIFLWTSGTLFHVAWQGNFEQWIKDPLNVRPIAHAIWDPHFGQGAIDAFTQAGASNPVNIAYSGVYHWFYTIGMTTNADLYQGAVFLLILSSLFLFAGWLHLQPKFRPSLAWFKDAESRLNHHLAGLFGVSSLAWTGHLVHVAIPESRGVHVGWDNFLSVKPHPAGLMPFFTGNWGVYAQNPDTAGHVFGTSQGAGTAILTFLGGFHPQTESLWLTDIAHHHLAIAVLFIIAGHMYRTKFGIGHSIKEILNAHQPPSGKLGAGHKGLYDTVNNSLHFQLGLALASLGVITSLVAQHMYSLPSYAFIAKDYTTQAALYTHHQYIAGFLMVGAFAHGAIFFVRDYDPEANKDNVLYRMLEHKEALISHLSWVSLFLGFHTLGLYVHNDVVVAFGTPEKQILIEPVFAQFVQAASGKALYGFDVLLSNADSIASNASAAYLPGWLDAINSGSNSLFLNIGPGDFLVHHAIALGLHTTTLILVKGALDARGSKLMPDKKDFGYSFPCDGPGRGGTCDISAWDAFYLAMFWMLNTLGWLTFYWHWKHLGIWQGNVAQFNENSTYLMGWFRDYLWANSAQLINGYNPYGVNNLSVWAWMFLFGHLVWATGFMFLISWRGYWQELIETIVWAHERTPLANIVRWKDKPVALSIVQARLVGLAHFTVGYVLTYAAFLIASTSGKFG</sequence>
<gene>
    <name evidence="2" type="primary">psaB</name>
    <name type="ordered locus">SYNPCC7002_A1962</name>
</gene>
<accession>P17155</accession>
<accession>B1XQQ4</accession>
<comment type="function">
    <text evidence="2">PsaA and PsaB bind P700, the primary electron donor of photosystem I (PSI), as well as the electron acceptors A0, A1 and FX. PSI is a plastocyanin/cytochrome c6-ferredoxin oxidoreductase, converting photonic excitation into a charge separation, which transfers an electron from the donor P700 chlorophyll pair to the spectroscopically characterized acceptors A0, A1, FX, FA and FB in turn. Oxidized P700 is reduced on the lumenal side of the thylakoid membrane by plastocyanin or cytochrome c6.</text>
</comment>
<comment type="catalytic activity">
    <reaction evidence="2">
        <text>reduced [plastocyanin] + hnu + oxidized [2Fe-2S]-[ferredoxin] = oxidized [plastocyanin] + reduced [2Fe-2S]-[ferredoxin]</text>
        <dbReference type="Rhea" id="RHEA:30407"/>
        <dbReference type="Rhea" id="RHEA-COMP:10000"/>
        <dbReference type="Rhea" id="RHEA-COMP:10001"/>
        <dbReference type="Rhea" id="RHEA-COMP:10039"/>
        <dbReference type="Rhea" id="RHEA-COMP:10040"/>
        <dbReference type="ChEBI" id="CHEBI:29036"/>
        <dbReference type="ChEBI" id="CHEBI:30212"/>
        <dbReference type="ChEBI" id="CHEBI:33737"/>
        <dbReference type="ChEBI" id="CHEBI:33738"/>
        <dbReference type="ChEBI" id="CHEBI:49552"/>
        <dbReference type="EC" id="1.97.1.12"/>
    </reaction>
</comment>
<comment type="cofactor">
    <text evidence="2">PSI electron transfer chain: 5 chlorophyll a, 1 chlorophyll a', 2 phylloquinones and 3 4Fe-4S clusters. PSI core antenna: 90 chlorophyll a, 22 carotenoids, 3 phospholipids and 1 galactolipid. P700 is a chlorophyll a/chlorophyll a' dimer, A0 is one or more chlorophyll a, A1 is one or both phylloquinones and FX is a shared 4Fe-4S iron-sulfur center.</text>
</comment>
<comment type="subunit">
    <text evidence="2">The PsaA/B heterodimer binds the P700 chlorophyll special pair and subsequent electron acceptors. PSI consists of a core antenna complex that captures photons, and an electron transfer chain that converts photonic excitation into a charge separation. The cyanobacterial PSI reaction center is composed of one copy each of PsaA,B,C,D,E,F,I,J,K,L,M and X, and forms trimeric complexes.</text>
</comment>
<comment type="subcellular location">
    <subcellularLocation>
        <location evidence="2">Cellular thylakoid membrane</location>
        <topology evidence="2">Multi-pass membrane protein</topology>
    </subcellularLocation>
</comment>
<comment type="similarity">
    <text evidence="2">Belongs to the PsaA/PsaB family.</text>
</comment>
<feature type="initiator methionine" description="Removed" evidence="1">
    <location>
        <position position="1"/>
    </location>
</feature>
<feature type="chain" id="PRO_0000088655" description="Photosystem I P700 chlorophyll a apoprotein A2">
    <location>
        <begin position="2"/>
        <end position="733"/>
    </location>
</feature>
<feature type="transmembrane region" description="Helical; Name=I" evidence="2">
    <location>
        <begin position="46"/>
        <end position="69"/>
    </location>
</feature>
<feature type="transmembrane region" description="Helical; Name=II" evidence="2">
    <location>
        <begin position="135"/>
        <end position="158"/>
    </location>
</feature>
<feature type="transmembrane region" description="Helical; Name=III" evidence="2">
    <location>
        <begin position="175"/>
        <end position="199"/>
    </location>
</feature>
<feature type="transmembrane region" description="Helical; Name=IV" evidence="2">
    <location>
        <begin position="273"/>
        <end position="291"/>
    </location>
</feature>
<feature type="transmembrane region" description="Helical; Name=V" evidence="2">
    <location>
        <begin position="330"/>
        <end position="353"/>
    </location>
</feature>
<feature type="transmembrane region" description="Helical; Name=VI" evidence="2">
    <location>
        <begin position="369"/>
        <end position="395"/>
    </location>
</feature>
<feature type="transmembrane region" description="Helical; Name=VII" evidence="2">
    <location>
        <begin position="417"/>
        <end position="439"/>
    </location>
</feature>
<feature type="transmembrane region" description="Helical; Name=VIII" evidence="2">
    <location>
        <begin position="516"/>
        <end position="534"/>
    </location>
</feature>
<feature type="transmembrane region" description="Helical; Name=IX" evidence="2">
    <location>
        <begin position="574"/>
        <end position="595"/>
    </location>
</feature>
<feature type="transmembrane region" description="Helical; Name=X" evidence="2">
    <location>
        <begin position="642"/>
        <end position="664"/>
    </location>
</feature>
<feature type="transmembrane region" description="Helical; Name=XI" evidence="2">
    <location>
        <begin position="706"/>
        <end position="726"/>
    </location>
</feature>
<feature type="binding site" evidence="2">
    <location>
        <position position="558"/>
    </location>
    <ligand>
        <name>[4Fe-4S] cluster</name>
        <dbReference type="ChEBI" id="CHEBI:49883"/>
        <note>ligand shared between dimeric partners</note>
    </ligand>
</feature>
<feature type="binding site" evidence="2">
    <location>
        <position position="567"/>
    </location>
    <ligand>
        <name>[4Fe-4S] cluster</name>
        <dbReference type="ChEBI" id="CHEBI:49883"/>
        <note>ligand shared between dimeric partners</note>
    </ligand>
</feature>
<feature type="binding site" description="axial binding residue" evidence="2">
    <location>
        <position position="653"/>
    </location>
    <ligand>
        <name>chlorophyll a</name>
        <dbReference type="ChEBI" id="CHEBI:58416"/>
        <label>B1</label>
    </ligand>
    <ligandPart>
        <name>Mg</name>
        <dbReference type="ChEBI" id="CHEBI:25107"/>
    </ligandPart>
</feature>
<feature type="binding site" description="axial binding residue" evidence="2">
    <location>
        <position position="661"/>
    </location>
    <ligand>
        <name>chlorophyll a</name>
        <dbReference type="ChEBI" id="CHEBI:58416"/>
        <label>B3</label>
    </ligand>
    <ligandPart>
        <name>Mg</name>
        <dbReference type="ChEBI" id="CHEBI:25107"/>
    </ligandPart>
</feature>
<feature type="binding site" evidence="2">
    <location>
        <position position="669"/>
    </location>
    <ligand>
        <name>chlorophyll a</name>
        <dbReference type="ChEBI" id="CHEBI:58416"/>
        <label>B3</label>
    </ligand>
</feature>
<feature type="binding site" evidence="2">
    <location>
        <position position="670"/>
    </location>
    <ligand>
        <name>phylloquinone</name>
        <dbReference type="ChEBI" id="CHEBI:18067"/>
        <label>B</label>
    </ligand>
</feature>
<feature type="sequence conflict" description="In Ref. 1; AAA88634." evidence="3" ref="1">
    <original>KFG</original>
    <variation>NVR</variation>
    <location>
        <begin position="294"/>
        <end position="296"/>
    </location>
</feature>
<feature type="sequence conflict" description="In Ref. 1; AAA88634." evidence="3" ref="1">
    <original>N</original>
    <variation>K</variation>
    <location>
        <position position="611"/>
    </location>
</feature>
<dbReference type="EC" id="1.97.1.12" evidence="2"/>
<dbReference type="EMBL" id="M18165">
    <property type="protein sequence ID" value="AAA88634.1"/>
    <property type="molecule type" value="Genomic_DNA"/>
</dbReference>
<dbReference type="EMBL" id="CP000951">
    <property type="protein sequence ID" value="ACA99949.1"/>
    <property type="molecule type" value="Genomic_DNA"/>
</dbReference>
<dbReference type="PIR" id="S06902">
    <property type="entry name" value="S06902"/>
</dbReference>
<dbReference type="RefSeq" id="WP_012307572.1">
    <property type="nucleotide sequence ID" value="NZ_JAHHPU010000002.1"/>
</dbReference>
<dbReference type="SMR" id="P17155"/>
<dbReference type="STRING" id="32049.SYNPCC7002_A1962"/>
<dbReference type="KEGG" id="syp:SYNPCC7002_A1962"/>
<dbReference type="eggNOG" id="COG2885">
    <property type="taxonomic scope" value="Bacteria"/>
</dbReference>
<dbReference type="HOGENOM" id="CLU_016126_1_0_3"/>
<dbReference type="Proteomes" id="UP000001688">
    <property type="component" value="Chromosome"/>
</dbReference>
<dbReference type="GO" id="GO:0009522">
    <property type="term" value="C:photosystem I"/>
    <property type="evidence" value="ECO:0007669"/>
    <property type="project" value="UniProtKB-KW"/>
</dbReference>
<dbReference type="GO" id="GO:0031676">
    <property type="term" value="C:plasma membrane-derived thylakoid membrane"/>
    <property type="evidence" value="ECO:0007669"/>
    <property type="project" value="UniProtKB-SubCell"/>
</dbReference>
<dbReference type="GO" id="GO:0051539">
    <property type="term" value="F:4 iron, 4 sulfur cluster binding"/>
    <property type="evidence" value="ECO:0007669"/>
    <property type="project" value="UniProtKB-KW"/>
</dbReference>
<dbReference type="GO" id="GO:0016168">
    <property type="term" value="F:chlorophyll binding"/>
    <property type="evidence" value="ECO:0007669"/>
    <property type="project" value="UniProtKB-KW"/>
</dbReference>
<dbReference type="GO" id="GO:0009055">
    <property type="term" value="F:electron transfer activity"/>
    <property type="evidence" value="ECO:0007669"/>
    <property type="project" value="UniProtKB-UniRule"/>
</dbReference>
<dbReference type="GO" id="GO:0000287">
    <property type="term" value="F:magnesium ion binding"/>
    <property type="evidence" value="ECO:0007669"/>
    <property type="project" value="UniProtKB-UniRule"/>
</dbReference>
<dbReference type="GO" id="GO:0016491">
    <property type="term" value="F:oxidoreductase activity"/>
    <property type="evidence" value="ECO:0007669"/>
    <property type="project" value="UniProtKB-KW"/>
</dbReference>
<dbReference type="GO" id="GO:0015979">
    <property type="term" value="P:photosynthesis"/>
    <property type="evidence" value="ECO:0007669"/>
    <property type="project" value="UniProtKB-UniRule"/>
</dbReference>
<dbReference type="FunFam" id="1.20.1130.10:FF:000001">
    <property type="entry name" value="Photosystem I P700 chlorophyll a apoprotein A2"/>
    <property type="match status" value="1"/>
</dbReference>
<dbReference type="Gene3D" id="1.20.1130.10">
    <property type="entry name" value="Photosystem I PsaA/PsaB"/>
    <property type="match status" value="1"/>
</dbReference>
<dbReference type="HAMAP" id="MF_00482">
    <property type="entry name" value="PSI_PsaB"/>
    <property type="match status" value="1"/>
</dbReference>
<dbReference type="InterPro" id="IPR001280">
    <property type="entry name" value="PSI_PsaA/B"/>
</dbReference>
<dbReference type="InterPro" id="IPR020586">
    <property type="entry name" value="PSI_PsaA/B_CS"/>
</dbReference>
<dbReference type="InterPro" id="IPR036408">
    <property type="entry name" value="PSI_PsaA/B_sf"/>
</dbReference>
<dbReference type="InterPro" id="IPR006244">
    <property type="entry name" value="PSI_PsaB"/>
</dbReference>
<dbReference type="NCBIfam" id="TIGR01336">
    <property type="entry name" value="psaB"/>
    <property type="match status" value="1"/>
</dbReference>
<dbReference type="PANTHER" id="PTHR30128">
    <property type="entry name" value="OUTER MEMBRANE PROTEIN, OMPA-RELATED"/>
    <property type="match status" value="1"/>
</dbReference>
<dbReference type="PANTHER" id="PTHR30128:SF19">
    <property type="entry name" value="PHOTOSYSTEM I P700 CHLOROPHYLL A APOPROTEIN A1-RELATED"/>
    <property type="match status" value="1"/>
</dbReference>
<dbReference type="Pfam" id="PF00223">
    <property type="entry name" value="PsaA_PsaB"/>
    <property type="match status" value="1"/>
</dbReference>
<dbReference type="PIRSF" id="PIRSF002905">
    <property type="entry name" value="PSI_A"/>
    <property type="match status" value="1"/>
</dbReference>
<dbReference type="PRINTS" id="PR00257">
    <property type="entry name" value="PHOTSYSPSAAB"/>
</dbReference>
<dbReference type="SUPFAM" id="SSF81558">
    <property type="entry name" value="Photosystem I subunits PsaA/PsaB"/>
    <property type="match status" value="1"/>
</dbReference>
<dbReference type="PROSITE" id="PS00419">
    <property type="entry name" value="PHOTOSYSTEM_I_PSAAB"/>
    <property type="match status" value="1"/>
</dbReference>
<evidence type="ECO:0000250" key="1"/>
<evidence type="ECO:0000255" key="2">
    <source>
        <dbReference type="HAMAP-Rule" id="MF_00482"/>
    </source>
</evidence>
<evidence type="ECO:0000305" key="3"/>
<protein>
    <recommendedName>
        <fullName evidence="2">Photosystem I P700 chlorophyll a apoprotein A2</fullName>
        <ecNumber evidence="2">1.97.1.12</ecNumber>
    </recommendedName>
    <alternativeName>
        <fullName evidence="2">PsaB</fullName>
    </alternativeName>
</protein>
<proteinExistence type="inferred from homology"/>
<reference key="1">
    <citation type="journal article" date="1987" name="Plant Mol. Biol.">
        <title>Molecular cloning and nucleotide sequence of the psaA and psaB genes of the cyanobacterium Synechococcus sp. PCC 7002.</title>
        <authorList>
            <person name="Cantrell A."/>
            <person name="Bryant D.A."/>
        </authorList>
    </citation>
    <scope>NUCLEOTIDE SEQUENCE [GENOMIC DNA]</scope>
</reference>
<reference key="2">
    <citation type="submission" date="2008-02" db="EMBL/GenBank/DDBJ databases">
        <title>Complete sequence of Synechococcus sp. PCC 7002.</title>
        <authorList>
            <person name="Li T."/>
            <person name="Zhao J."/>
            <person name="Zhao C."/>
            <person name="Liu Z."/>
            <person name="Zhao F."/>
            <person name="Marquardt J."/>
            <person name="Nomura C.T."/>
            <person name="Persson S."/>
            <person name="Detter J.C."/>
            <person name="Richardson P.M."/>
            <person name="Lanz C."/>
            <person name="Schuster S.C."/>
            <person name="Wang J."/>
            <person name="Li S."/>
            <person name="Huang X."/>
            <person name="Cai T."/>
            <person name="Yu Z."/>
            <person name="Luo J."/>
            <person name="Zhao J."/>
            <person name="Bryant D.A."/>
        </authorList>
    </citation>
    <scope>NUCLEOTIDE SEQUENCE [LARGE SCALE GENOMIC DNA]</scope>
    <source>
        <strain>ATCC 27264 / PCC 7002 / PR-6</strain>
    </source>
</reference>